<proteinExistence type="inferred from homology"/>
<name>ATPF2_DESOH</name>
<organism>
    <name type="scientific">Desulfosudis oleivorans (strain DSM 6200 / JCM 39069 / Hxd3)</name>
    <name type="common">Desulfococcus oleovorans</name>
    <dbReference type="NCBI Taxonomy" id="96561"/>
    <lineage>
        <taxon>Bacteria</taxon>
        <taxon>Pseudomonadati</taxon>
        <taxon>Thermodesulfobacteriota</taxon>
        <taxon>Desulfobacteria</taxon>
        <taxon>Desulfobacterales</taxon>
        <taxon>Desulfosudaceae</taxon>
        <taxon>Desulfosudis</taxon>
    </lineage>
</organism>
<keyword id="KW-0066">ATP synthesis</keyword>
<keyword id="KW-0997">Cell inner membrane</keyword>
<keyword id="KW-1003">Cell membrane</keyword>
<keyword id="KW-0138">CF(0)</keyword>
<keyword id="KW-0375">Hydrogen ion transport</keyword>
<keyword id="KW-0406">Ion transport</keyword>
<keyword id="KW-0472">Membrane</keyword>
<keyword id="KW-1185">Reference proteome</keyword>
<keyword id="KW-0812">Transmembrane</keyword>
<keyword id="KW-1133">Transmembrane helix</keyword>
<keyword id="KW-0813">Transport</keyword>
<sequence length="209" mass="23754">MRKNNGIKWWGWVTLSVLVMVAGDGTLAFAQETGGSAGWRPVYDNVMLVINFLILVFLLAKLLKNPLKNFLKTRHDEVAKELERLETERERAANDVADTKKQVAAEGTHILEIRERIIAEGERTKLAIIENAKKESEFLIEAARRRIQGRFQEARQAFRSELIESAMSIVSRRLPQEIGPQDQARQVDLFFTSLDQAQSKFSSARSASR</sequence>
<protein>
    <recommendedName>
        <fullName evidence="1">ATP synthase subunit b 2</fullName>
    </recommendedName>
    <alternativeName>
        <fullName evidence="1">ATP synthase F(0) sector subunit b 2</fullName>
    </alternativeName>
    <alternativeName>
        <fullName evidence="1">ATPase subunit I 2</fullName>
    </alternativeName>
    <alternativeName>
        <fullName evidence="1">F-type ATPase subunit b 2</fullName>
        <shortName evidence="1">F-ATPase subunit b 2</shortName>
    </alternativeName>
</protein>
<feature type="chain" id="PRO_0000368458" description="ATP synthase subunit b 2">
    <location>
        <begin position="1"/>
        <end position="209"/>
    </location>
</feature>
<feature type="transmembrane region" description="Helical" evidence="1">
    <location>
        <begin position="9"/>
        <end position="29"/>
    </location>
</feature>
<evidence type="ECO:0000255" key="1">
    <source>
        <dbReference type="HAMAP-Rule" id="MF_01398"/>
    </source>
</evidence>
<gene>
    <name evidence="1" type="primary">atpF2</name>
    <name type="ordered locus">Dole_0804</name>
</gene>
<comment type="function">
    <text evidence="1">F(1)F(0) ATP synthase produces ATP from ADP in the presence of a proton or sodium gradient. F-type ATPases consist of two structural domains, F(1) containing the extramembraneous catalytic core and F(0) containing the membrane proton channel, linked together by a central stalk and a peripheral stalk. During catalysis, ATP synthesis in the catalytic domain of F(1) is coupled via a rotary mechanism of the central stalk subunits to proton translocation.</text>
</comment>
<comment type="function">
    <text evidence="1">Component of the F(0) channel, it forms part of the peripheral stalk, linking F(1) to F(0).</text>
</comment>
<comment type="subunit">
    <text evidence="1">F-type ATPases have 2 components, F(1) - the catalytic core - and F(0) - the membrane proton channel. F(1) has five subunits: alpha(3), beta(3), gamma(1), delta(1), epsilon(1). F(0) has three main subunits: a(1), b(2) and c(10-14). The alpha and beta chains form an alternating ring which encloses part of the gamma chain. F(1) is attached to F(0) by a central stalk formed by the gamma and epsilon chains, while a peripheral stalk is formed by the delta and b chains.</text>
</comment>
<comment type="subcellular location">
    <subcellularLocation>
        <location evidence="1">Cell inner membrane</location>
        <topology evidence="1">Single-pass membrane protein</topology>
    </subcellularLocation>
</comment>
<comment type="similarity">
    <text evidence="1">Belongs to the ATPase B chain family.</text>
</comment>
<dbReference type="EMBL" id="CP000859">
    <property type="protein sequence ID" value="ABW66614.1"/>
    <property type="molecule type" value="Genomic_DNA"/>
</dbReference>
<dbReference type="RefSeq" id="WP_012174232.1">
    <property type="nucleotide sequence ID" value="NC_009943.1"/>
</dbReference>
<dbReference type="SMR" id="A8ZVQ5"/>
<dbReference type="STRING" id="96561.Dole_0804"/>
<dbReference type="KEGG" id="dol:Dole_0804"/>
<dbReference type="eggNOG" id="COG0711">
    <property type="taxonomic scope" value="Bacteria"/>
</dbReference>
<dbReference type="HOGENOM" id="CLU_1313763_0_0_7"/>
<dbReference type="Proteomes" id="UP000008561">
    <property type="component" value="Chromosome"/>
</dbReference>
<dbReference type="GO" id="GO:0005886">
    <property type="term" value="C:plasma membrane"/>
    <property type="evidence" value="ECO:0007669"/>
    <property type="project" value="UniProtKB-SubCell"/>
</dbReference>
<dbReference type="GO" id="GO:0045259">
    <property type="term" value="C:proton-transporting ATP synthase complex"/>
    <property type="evidence" value="ECO:0007669"/>
    <property type="project" value="UniProtKB-KW"/>
</dbReference>
<dbReference type="GO" id="GO:0046933">
    <property type="term" value="F:proton-transporting ATP synthase activity, rotational mechanism"/>
    <property type="evidence" value="ECO:0007669"/>
    <property type="project" value="UniProtKB-UniRule"/>
</dbReference>
<dbReference type="GO" id="GO:0046961">
    <property type="term" value="F:proton-transporting ATPase activity, rotational mechanism"/>
    <property type="evidence" value="ECO:0007669"/>
    <property type="project" value="TreeGrafter"/>
</dbReference>
<dbReference type="CDD" id="cd06503">
    <property type="entry name" value="ATP-synt_Fo_b"/>
    <property type="match status" value="1"/>
</dbReference>
<dbReference type="HAMAP" id="MF_01398">
    <property type="entry name" value="ATP_synth_b_bprime"/>
    <property type="match status" value="1"/>
</dbReference>
<dbReference type="InterPro" id="IPR002146">
    <property type="entry name" value="ATP_synth_b/b'su_bac/chlpt"/>
</dbReference>
<dbReference type="InterPro" id="IPR050059">
    <property type="entry name" value="ATP_synthase_B_chain"/>
</dbReference>
<dbReference type="PANTHER" id="PTHR33445">
    <property type="entry name" value="ATP SYNTHASE SUBUNIT B', CHLOROPLASTIC"/>
    <property type="match status" value="1"/>
</dbReference>
<dbReference type="PANTHER" id="PTHR33445:SF2">
    <property type="entry name" value="ATP SYNTHASE SUBUNIT B', CHLOROPLASTIC"/>
    <property type="match status" value="1"/>
</dbReference>
<dbReference type="Pfam" id="PF00430">
    <property type="entry name" value="ATP-synt_B"/>
    <property type="match status" value="1"/>
</dbReference>
<reference key="1">
    <citation type="submission" date="2007-10" db="EMBL/GenBank/DDBJ databases">
        <title>Complete sequence of Desulfococcus oleovorans Hxd3.</title>
        <authorList>
            <consortium name="US DOE Joint Genome Institute"/>
            <person name="Copeland A."/>
            <person name="Lucas S."/>
            <person name="Lapidus A."/>
            <person name="Barry K."/>
            <person name="Glavina del Rio T."/>
            <person name="Dalin E."/>
            <person name="Tice H."/>
            <person name="Pitluck S."/>
            <person name="Kiss H."/>
            <person name="Brettin T."/>
            <person name="Bruce D."/>
            <person name="Detter J.C."/>
            <person name="Han C."/>
            <person name="Schmutz J."/>
            <person name="Larimer F."/>
            <person name="Land M."/>
            <person name="Hauser L."/>
            <person name="Kyrpides N."/>
            <person name="Kim E."/>
            <person name="Wawrik B."/>
            <person name="Richardson P."/>
        </authorList>
    </citation>
    <scope>NUCLEOTIDE SEQUENCE [LARGE SCALE GENOMIC DNA]</scope>
    <source>
        <strain>DSM 6200 / JCM 39069 / Hxd3</strain>
    </source>
</reference>
<accession>A8ZVQ5</accession>